<reference key="1">
    <citation type="journal article" date="2002" name="J. Bacteriol.">
        <title>Whole-genome comparison of Mycobacterium tuberculosis clinical and laboratory strains.</title>
        <authorList>
            <person name="Fleischmann R.D."/>
            <person name="Alland D."/>
            <person name="Eisen J.A."/>
            <person name="Carpenter L."/>
            <person name="White O."/>
            <person name="Peterson J.D."/>
            <person name="DeBoy R.T."/>
            <person name="Dodson R.J."/>
            <person name="Gwinn M.L."/>
            <person name="Haft D.H."/>
            <person name="Hickey E.K."/>
            <person name="Kolonay J.F."/>
            <person name="Nelson W.C."/>
            <person name="Umayam L.A."/>
            <person name="Ermolaeva M.D."/>
            <person name="Salzberg S.L."/>
            <person name="Delcher A."/>
            <person name="Utterback T.R."/>
            <person name="Weidman J.F."/>
            <person name="Khouri H.M."/>
            <person name="Gill J."/>
            <person name="Mikula A."/>
            <person name="Bishai W."/>
            <person name="Jacobs W.R. Jr."/>
            <person name="Venter J.C."/>
            <person name="Fraser C.M."/>
        </authorList>
    </citation>
    <scope>NUCLEOTIDE SEQUENCE [LARGE SCALE GENOMIC DNA]</scope>
    <source>
        <strain>CDC 1551 / Oshkosh</strain>
    </source>
</reference>
<proteinExistence type="inferred from homology"/>
<gene>
    <name type="primary">echA17</name>
    <name type="ordered locus">MT3124</name>
</gene>
<dbReference type="EC" id="4.2.1.17"/>
<dbReference type="EMBL" id="AE000516">
    <property type="protein sequence ID" value="AAK47454.1"/>
    <property type="status" value="ALT_INIT"/>
    <property type="molecule type" value="Genomic_DNA"/>
</dbReference>
<dbReference type="PIR" id="B70860">
    <property type="entry name" value="B70860"/>
</dbReference>
<dbReference type="SMR" id="P9WNN2"/>
<dbReference type="KEGG" id="mtc:MT3124"/>
<dbReference type="PATRIC" id="fig|83331.31.peg.3366"/>
<dbReference type="HOGENOM" id="CLU_009834_7_6_11"/>
<dbReference type="Proteomes" id="UP000001020">
    <property type="component" value="Chromosome"/>
</dbReference>
<dbReference type="GO" id="GO:0004300">
    <property type="term" value="F:enoyl-CoA hydratase activity"/>
    <property type="evidence" value="ECO:0007669"/>
    <property type="project" value="UniProtKB-EC"/>
</dbReference>
<dbReference type="GO" id="GO:0006635">
    <property type="term" value="P:fatty acid beta-oxidation"/>
    <property type="evidence" value="ECO:0007669"/>
    <property type="project" value="TreeGrafter"/>
</dbReference>
<dbReference type="CDD" id="cd06558">
    <property type="entry name" value="crotonase-like"/>
    <property type="match status" value="1"/>
</dbReference>
<dbReference type="FunFam" id="3.90.226.10:FF:000009">
    <property type="entry name" value="Carnitinyl-CoA dehydratase"/>
    <property type="match status" value="1"/>
</dbReference>
<dbReference type="Gene3D" id="3.90.226.10">
    <property type="entry name" value="2-enoyl-CoA Hydratase, Chain A, domain 1"/>
    <property type="match status" value="1"/>
</dbReference>
<dbReference type="Gene3D" id="1.10.12.10">
    <property type="entry name" value="Lyase 2-enoyl-coa Hydratase, Chain A, domain 2"/>
    <property type="match status" value="1"/>
</dbReference>
<dbReference type="InterPro" id="IPR029045">
    <property type="entry name" value="ClpP/crotonase-like_dom_sf"/>
</dbReference>
<dbReference type="InterPro" id="IPR001753">
    <property type="entry name" value="Enoyl-CoA_hydra/iso"/>
</dbReference>
<dbReference type="InterPro" id="IPR014748">
    <property type="entry name" value="Enoyl-CoA_hydra_C"/>
</dbReference>
<dbReference type="NCBIfam" id="NF004524">
    <property type="entry name" value="PRK05869.1"/>
    <property type="match status" value="1"/>
</dbReference>
<dbReference type="PANTHER" id="PTHR11941:SF169">
    <property type="entry name" value="(7AS)-7A-METHYL-1,5-DIOXO-2,3,5,6,7,7A-HEXAHYDRO-1H-INDENE-CARBOXYL-COA HYDROLASE"/>
    <property type="match status" value="1"/>
</dbReference>
<dbReference type="PANTHER" id="PTHR11941">
    <property type="entry name" value="ENOYL-COA HYDRATASE-RELATED"/>
    <property type="match status" value="1"/>
</dbReference>
<dbReference type="Pfam" id="PF00378">
    <property type="entry name" value="ECH_1"/>
    <property type="match status" value="1"/>
</dbReference>
<dbReference type="SUPFAM" id="SSF52096">
    <property type="entry name" value="ClpP/crotonase"/>
    <property type="match status" value="1"/>
</dbReference>
<accession>P9WNN2</accession>
<accession>L0TEA7</accession>
<accession>O53286</accession>
<accession>Q7D686</accession>
<keyword id="KW-0276">Fatty acid metabolism</keyword>
<keyword id="KW-0443">Lipid metabolism</keyword>
<keyword id="KW-0456">Lyase</keyword>
<keyword id="KW-1185">Reference proteome</keyword>
<protein>
    <recommendedName>
        <fullName>Probable enoyl-CoA hydratase EchA17</fullName>
        <ecNumber>4.2.1.17</ecNumber>
    </recommendedName>
</protein>
<organism>
    <name type="scientific">Mycobacterium tuberculosis (strain CDC 1551 / Oshkosh)</name>
    <dbReference type="NCBI Taxonomy" id="83331"/>
    <lineage>
        <taxon>Bacteria</taxon>
        <taxon>Bacillati</taxon>
        <taxon>Actinomycetota</taxon>
        <taxon>Actinomycetes</taxon>
        <taxon>Mycobacteriales</taxon>
        <taxon>Mycobacteriaceae</taxon>
        <taxon>Mycobacterium</taxon>
        <taxon>Mycobacterium tuberculosis complex</taxon>
    </lineage>
</organism>
<name>ECH17_MYCTO</name>
<feature type="chain" id="PRO_0000427097" description="Probable enoyl-CoA hydratase EchA17">
    <location>
        <begin position="1"/>
        <end position="261"/>
    </location>
</feature>
<feature type="site" description="Important for catalytic activity" evidence="1">
    <location>
        <position position="143"/>
    </location>
</feature>
<sequence>MAAVTPTVPEFVNVVVSDGSQDAGLAMLLLSRPPTNAMTRQVYREVVAAANELGRRDDVAAVILYGGHEIFSAGDDMPELRTLSAQEADTAARIRQQAVDAVAAIPKPTVAAITGYALGAGLTLALAADWRVSGDNVKFGATEILAGLIPSGDGMARLTRAAGPSRAKELVFSGRFFDAEEALALGLIDDMVAPDDVYDAAAAWARRFLDGPPHALAAAKAGISDVYELAPAERIAAERRRYVEVFAAGQGGGSKGDRGGR</sequence>
<evidence type="ECO:0000250" key="1"/>
<evidence type="ECO:0000250" key="2">
    <source>
        <dbReference type="UniProtKB" id="P9WNN3"/>
    </source>
</evidence>
<evidence type="ECO:0000305" key="3"/>
<comment type="function">
    <text evidence="1">Could possibly oxidize fatty acids using specific components.</text>
</comment>
<comment type="catalytic activity">
    <reaction>
        <text>a (3S)-3-hydroxyacyl-CoA = a (2E)-enoyl-CoA + H2O</text>
        <dbReference type="Rhea" id="RHEA:16105"/>
        <dbReference type="ChEBI" id="CHEBI:15377"/>
        <dbReference type="ChEBI" id="CHEBI:57318"/>
        <dbReference type="ChEBI" id="CHEBI:58856"/>
        <dbReference type="EC" id="4.2.1.17"/>
    </reaction>
</comment>
<comment type="catalytic activity">
    <reaction>
        <text>a 4-saturated-(3S)-3-hydroxyacyl-CoA = a (3E)-enoyl-CoA + H2O</text>
        <dbReference type="Rhea" id="RHEA:20724"/>
        <dbReference type="ChEBI" id="CHEBI:15377"/>
        <dbReference type="ChEBI" id="CHEBI:58521"/>
        <dbReference type="ChEBI" id="CHEBI:137480"/>
        <dbReference type="EC" id="4.2.1.17"/>
    </reaction>
</comment>
<comment type="similarity">
    <text evidence="3">Belongs to the enoyl-CoA hydratase/isomerase family.</text>
</comment>
<comment type="sequence caution" evidence="2">
    <conflict type="erroneous initiation">
        <sequence resource="EMBL-CDS" id="AAK47454"/>
    </conflict>
    <text>Truncated N-terminus.</text>
</comment>